<accession>Q8K485</accession>
<proteinExistence type="evidence at protein level"/>
<comment type="function">
    <text evidence="1 2 3">Plays a role as a marker and a regulator of neuronal differentiation; Up-regulated by a variety of neurogenic signals, such as retinoic acid, epidermal growth factor/EGF and NGFB/nerve growth factor. Induces apoptosis, growth arrest and the expression of cyclin-dependent kinase inhibitor CDKN1B. Plays a role as a tumor repressor and inhibits cell growth and tumorigenicity of medulloblastoma (MDB). Acts as a probable substrate-specific adapter for a BCR (BTB-CUL3-RBX1) E3 ubiquitin-protein ligase complex towards HDAC1. Functions as antagonist of the Hedgehog pathway on cell proliferation and differentiation by affecting the nuclear transfer of transcription factor GLI1, thus maintaining cerebellar granule cells in undifferentiated state, this effect probably occurs via HDAC1 down-regulation, keeping GLI1 acetylated and inactive. When knock-down, Hedgehog antagonism is impaired and proliferation of granule cells is sustained. Activates the caspase cascade.</text>
</comment>
<comment type="pathway">
    <text>Protein modification; protein ubiquitination.</text>
</comment>
<comment type="subunit">
    <text evidence="1">Homopentamer. Interacts with KCTD6 and KCTD21; KCTD11 and KCTD6 or KCTD21 may associate in pentameric assemblies. Component of the BCR(KCTD11) E3 ubiquitin ligase complex, at least composed of CUL3 and KCTD11 and RBX1. Interacts (via BTB domain) with CUL3; initially a 4:4 stoichiometry has been reported, however, electron microscopy revealed pentameric states of the BTB domain.</text>
</comment>
<comment type="tissue specificity">
    <text evidence="2 3">Weakly expressed in lung. In the cerebellum, higher expression in non proliferating external granule cells layer than in highly proliferating ones.</text>
</comment>
<comment type="developmental stage">
    <text evidence="2">Detected at 7.5 dpc in neuroectodermal cells, and later in neural crest, in ventral region of the spinal cord and in ventricular epithelium of the neural tube.</text>
</comment>
<comment type="domain">
    <text>The BTB domain is required for growth-suppressing properties.</text>
</comment>
<comment type="miscellaneous">
    <text>Overexpression of Kctd11 by lentiviral vector injection inhibits xenograft tumor growth in athymic nude mice.</text>
</comment>
<keyword id="KW-0131">Cell cycle</keyword>
<keyword id="KW-0217">Developmental protein</keyword>
<keyword id="KW-0341">Growth regulation</keyword>
<keyword id="KW-1185">Reference proteome</keyword>
<keyword id="KW-0808">Transferase</keyword>
<keyword id="KW-0043">Tumor suppressor</keyword>
<keyword id="KW-0833">Ubl conjugation pathway</keyword>
<sequence length="232" mass="26300">MLGAMFRADTLMPANLNPQGDGHYFIDRDGKAFRHILNFLRLGRLDLPRGYGETALLKAEADFYQIRPLLDALRELEASRGTPASTAALLHADVDVSPRQVHFSARRGPHHYELSSVQVDTFRANLFCTDPECLAAMRNRFGVAIGDRAEGGPHFRLEWASRPQELPEVEYQRLGLQPLWTGGPEDRREVANTPTFLEEVLRVALEHGFRLDSVFPDPEDLLNSRSLRFVRH</sequence>
<organism>
    <name type="scientific">Mus musculus</name>
    <name type="common">Mouse</name>
    <dbReference type="NCBI Taxonomy" id="10090"/>
    <lineage>
        <taxon>Eukaryota</taxon>
        <taxon>Metazoa</taxon>
        <taxon>Chordata</taxon>
        <taxon>Craniata</taxon>
        <taxon>Vertebrata</taxon>
        <taxon>Euteleostomi</taxon>
        <taxon>Mammalia</taxon>
        <taxon>Eutheria</taxon>
        <taxon>Euarchontoglires</taxon>
        <taxon>Glires</taxon>
        <taxon>Rodentia</taxon>
        <taxon>Myomorpha</taxon>
        <taxon>Muroidea</taxon>
        <taxon>Muridae</taxon>
        <taxon>Murinae</taxon>
        <taxon>Mus</taxon>
        <taxon>Mus</taxon>
    </lineage>
</organism>
<name>KCD11_MOUSE</name>
<protein>
    <recommendedName>
        <fullName>BTB/POZ domain-containing protein KCTD11</fullName>
    </recommendedName>
    <alternativeName>
        <fullName evidence="4">KCASH1 protein</fullName>
    </alternativeName>
    <alternativeName>
        <fullName>Potassium channel tetramerization domain-containing protein 11</fullName>
    </alternativeName>
    <alternativeName>
        <fullName evidence="4">RING-type E3 ubiquitin transferase subunit KCTD11</fullName>
    </alternativeName>
</protein>
<reference key="1">
    <citation type="journal article" date="2002" name="J. Cell Biol.">
        <title>REN: a novel, developmentally regulated gene that promotes neural cell differentiation.</title>
        <authorList>
            <person name="Gallo R."/>
            <person name="Zazzeroni F."/>
            <person name="Alesse E."/>
            <person name="Mincione C."/>
            <person name="Borello U."/>
            <person name="Buanne P."/>
            <person name="D'Eugenio R."/>
            <person name="Mackay A.R."/>
            <person name="Argenti B."/>
            <person name="Gradini R."/>
            <person name="Russo M.A."/>
            <person name="Maroder M."/>
            <person name="Cossu G."/>
            <person name="Frati L."/>
            <person name="Screpanti I."/>
            <person name="Gulino A."/>
        </authorList>
    </citation>
    <scope>NUCLEOTIDE SEQUENCE [MRNA]</scope>
    <scope>FUNCTION</scope>
    <scope>DEVELOPMENTAL STAGE</scope>
    <scope>TISSUE SPECIFICITY</scope>
    <source>
        <strain>Swiss Webster</strain>
    </source>
</reference>
<reference key="2">
    <citation type="journal article" date="2005" name="Science">
        <title>The transcriptional landscape of the mammalian genome.</title>
        <authorList>
            <person name="Carninci P."/>
            <person name="Kasukawa T."/>
            <person name="Katayama S."/>
            <person name="Gough J."/>
            <person name="Frith M.C."/>
            <person name="Maeda N."/>
            <person name="Oyama R."/>
            <person name="Ravasi T."/>
            <person name="Lenhard B."/>
            <person name="Wells C."/>
            <person name="Kodzius R."/>
            <person name="Shimokawa K."/>
            <person name="Bajic V.B."/>
            <person name="Brenner S.E."/>
            <person name="Batalov S."/>
            <person name="Forrest A.R."/>
            <person name="Zavolan M."/>
            <person name="Davis M.J."/>
            <person name="Wilming L.G."/>
            <person name="Aidinis V."/>
            <person name="Allen J.E."/>
            <person name="Ambesi-Impiombato A."/>
            <person name="Apweiler R."/>
            <person name="Aturaliya R.N."/>
            <person name="Bailey T.L."/>
            <person name="Bansal M."/>
            <person name="Baxter L."/>
            <person name="Beisel K.W."/>
            <person name="Bersano T."/>
            <person name="Bono H."/>
            <person name="Chalk A.M."/>
            <person name="Chiu K.P."/>
            <person name="Choudhary V."/>
            <person name="Christoffels A."/>
            <person name="Clutterbuck D.R."/>
            <person name="Crowe M.L."/>
            <person name="Dalla E."/>
            <person name="Dalrymple B.P."/>
            <person name="de Bono B."/>
            <person name="Della Gatta G."/>
            <person name="di Bernardo D."/>
            <person name="Down T."/>
            <person name="Engstrom P."/>
            <person name="Fagiolini M."/>
            <person name="Faulkner G."/>
            <person name="Fletcher C.F."/>
            <person name="Fukushima T."/>
            <person name="Furuno M."/>
            <person name="Futaki S."/>
            <person name="Gariboldi M."/>
            <person name="Georgii-Hemming P."/>
            <person name="Gingeras T.R."/>
            <person name="Gojobori T."/>
            <person name="Green R.E."/>
            <person name="Gustincich S."/>
            <person name="Harbers M."/>
            <person name="Hayashi Y."/>
            <person name="Hensch T.K."/>
            <person name="Hirokawa N."/>
            <person name="Hill D."/>
            <person name="Huminiecki L."/>
            <person name="Iacono M."/>
            <person name="Ikeo K."/>
            <person name="Iwama A."/>
            <person name="Ishikawa T."/>
            <person name="Jakt M."/>
            <person name="Kanapin A."/>
            <person name="Katoh M."/>
            <person name="Kawasawa Y."/>
            <person name="Kelso J."/>
            <person name="Kitamura H."/>
            <person name="Kitano H."/>
            <person name="Kollias G."/>
            <person name="Krishnan S.P."/>
            <person name="Kruger A."/>
            <person name="Kummerfeld S.K."/>
            <person name="Kurochkin I.V."/>
            <person name="Lareau L.F."/>
            <person name="Lazarevic D."/>
            <person name="Lipovich L."/>
            <person name="Liu J."/>
            <person name="Liuni S."/>
            <person name="McWilliam S."/>
            <person name="Madan Babu M."/>
            <person name="Madera M."/>
            <person name="Marchionni L."/>
            <person name="Matsuda H."/>
            <person name="Matsuzawa S."/>
            <person name="Miki H."/>
            <person name="Mignone F."/>
            <person name="Miyake S."/>
            <person name="Morris K."/>
            <person name="Mottagui-Tabar S."/>
            <person name="Mulder N."/>
            <person name="Nakano N."/>
            <person name="Nakauchi H."/>
            <person name="Ng P."/>
            <person name="Nilsson R."/>
            <person name="Nishiguchi S."/>
            <person name="Nishikawa S."/>
            <person name="Nori F."/>
            <person name="Ohara O."/>
            <person name="Okazaki Y."/>
            <person name="Orlando V."/>
            <person name="Pang K.C."/>
            <person name="Pavan W.J."/>
            <person name="Pavesi G."/>
            <person name="Pesole G."/>
            <person name="Petrovsky N."/>
            <person name="Piazza S."/>
            <person name="Reed J."/>
            <person name="Reid J.F."/>
            <person name="Ring B.Z."/>
            <person name="Ringwald M."/>
            <person name="Rost B."/>
            <person name="Ruan Y."/>
            <person name="Salzberg S.L."/>
            <person name="Sandelin A."/>
            <person name="Schneider C."/>
            <person name="Schoenbach C."/>
            <person name="Sekiguchi K."/>
            <person name="Semple C.A."/>
            <person name="Seno S."/>
            <person name="Sessa L."/>
            <person name="Sheng Y."/>
            <person name="Shibata Y."/>
            <person name="Shimada H."/>
            <person name="Shimada K."/>
            <person name="Silva D."/>
            <person name="Sinclair B."/>
            <person name="Sperling S."/>
            <person name="Stupka E."/>
            <person name="Sugiura K."/>
            <person name="Sultana R."/>
            <person name="Takenaka Y."/>
            <person name="Taki K."/>
            <person name="Tammoja K."/>
            <person name="Tan S.L."/>
            <person name="Tang S."/>
            <person name="Taylor M.S."/>
            <person name="Tegner J."/>
            <person name="Teichmann S.A."/>
            <person name="Ueda H.R."/>
            <person name="van Nimwegen E."/>
            <person name="Verardo R."/>
            <person name="Wei C.L."/>
            <person name="Yagi K."/>
            <person name="Yamanishi H."/>
            <person name="Zabarovsky E."/>
            <person name="Zhu S."/>
            <person name="Zimmer A."/>
            <person name="Hide W."/>
            <person name="Bult C."/>
            <person name="Grimmond S.M."/>
            <person name="Teasdale R.D."/>
            <person name="Liu E.T."/>
            <person name="Brusic V."/>
            <person name="Quackenbush J."/>
            <person name="Wahlestedt C."/>
            <person name="Mattick J.S."/>
            <person name="Hume D.A."/>
            <person name="Kai C."/>
            <person name="Sasaki D."/>
            <person name="Tomaru Y."/>
            <person name="Fukuda S."/>
            <person name="Kanamori-Katayama M."/>
            <person name="Suzuki M."/>
            <person name="Aoki J."/>
            <person name="Arakawa T."/>
            <person name="Iida J."/>
            <person name="Imamura K."/>
            <person name="Itoh M."/>
            <person name="Kato T."/>
            <person name="Kawaji H."/>
            <person name="Kawagashira N."/>
            <person name="Kawashima T."/>
            <person name="Kojima M."/>
            <person name="Kondo S."/>
            <person name="Konno H."/>
            <person name="Nakano K."/>
            <person name="Ninomiya N."/>
            <person name="Nishio T."/>
            <person name="Okada M."/>
            <person name="Plessy C."/>
            <person name="Shibata K."/>
            <person name="Shiraki T."/>
            <person name="Suzuki S."/>
            <person name="Tagami M."/>
            <person name="Waki K."/>
            <person name="Watahiki A."/>
            <person name="Okamura-Oho Y."/>
            <person name="Suzuki H."/>
            <person name="Kawai J."/>
            <person name="Hayashizaki Y."/>
        </authorList>
    </citation>
    <scope>NUCLEOTIDE SEQUENCE [LARGE SCALE MRNA]</scope>
    <source>
        <strain>C57BL/6J</strain>
        <strain>NOD</strain>
        <tissue>Head</tissue>
        <tissue>Spinal cord</tissue>
    </source>
</reference>
<reference key="3">
    <citation type="journal article" date="2004" name="Genome Res.">
        <title>The status, quality, and expansion of the NIH full-length cDNA project: the Mammalian Gene Collection (MGC).</title>
        <authorList>
            <consortium name="The MGC Project Team"/>
        </authorList>
    </citation>
    <scope>NUCLEOTIDE SEQUENCE [LARGE SCALE MRNA]</scope>
    <source>
        <strain>C57BL/6J</strain>
        <strain>Czech II</strain>
        <tissue>Brain</tissue>
        <tissue>Lung</tissue>
    </source>
</reference>
<reference key="4">
    <citation type="journal article" date="2004" name="Proc. Natl. Acad. Sci. U.S.A.">
        <title>REN(KCTD11) is a suppressor of Hedgehog signaling and is deleted in human medulloblastoma.</title>
        <authorList>
            <person name="Di Marcotullio L."/>
            <person name="Ferretti E."/>
            <person name="De Smaele E."/>
            <person name="Argenti B."/>
            <person name="Mincione C."/>
            <person name="Zazzeroni F."/>
            <person name="Gallo R."/>
            <person name="Masuelli L."/>
            <person name="Napolitano M."/>
            <person name="Maroder M."/>
            <person name="Modesti A."/>
            <person name="Giangaspero F."/>
            <person name="Screpanti I."/>
            <person name="Alesse E."/>
            <person name="Gulino A."/>
        </authorList>
    </citation>
    <scope>MISCELLANEOUS</scope>
</reference>
<reference key="5">
    <citation type="journal article" date="2005" name="J. Neurosci.">
        <title>Hedgehog antagonist REN(KCTD11) regulates proliferation and apoptosis of developing granule cell progenitors.</title>
        <authorList>
            <person name="Argenti B."/>
            <person name="Gallo R."/>
            <person name="Di Marcotullio L."/>
            <person name="Ferretti E."/>
            <person name="Napolitano M."/>
            <person name="Canterini S."/>
            <person name="De Smaele E."/>
            <person name="Greco A."/>
            <person name="Fiorenza M.T."/>
            <person name="Maroder M."/>
            <person name="Screpanti I."/>
            <person name="Alesse E."/>
            <person name="Gulino A."/>
        </authorList>
    </citation>
    <scope>FUNCTION</scope>
    <scope>TISSUE SPECIFICITY</scope>
    <scope>CHARACTERIZATION OF BTB DOMAIN</scope>
</reference>
<feature type="chain" id="PRO_0000248592" description="BTB/POZ domain-containing protein KCTD11">
    <location>
        <begin position="1"/>
        <end position="232"/>
    </location>
</feature>
<feature type="domain" description="BTB">
    <location>
        <begin position="1"/>
        <end position="49"/>
    </location>
</feature>
<evidence type="ECO:0000250" key="1">
    <source>
        <dbReference type="UniProtKB" id="Q693B1"/>
    </source>
</evidence>
<evidence type="ECO:0000269" key="2">
    <source>
    </source>
</evidence>
<evidence type="ECO:0000269" key="3">
    <source>
    </source>
</evidence>
<evidence type="ECO:0000305" key="4"/>
<dbReference type="EMBL" id="AF465352">
    <property type="protein sequence ID" value="AAM95915.1"/>
    <property type="molecule type" value="mRNA"/>
</dbReference>
<dbReference type="EMBL" id="AK039558">
    <property type="protein sequence ID" value="BAC30382.1"/>
    <property type="molecule type" value="mRNA"/>
</dbReference>
<dbReference type="EMBL" id="AK161602">
    <property type="protein sequence ID" value="BAE36486.1"/>
    <property type="molecule type" value="mRNA"/>
</dbReference>
<dbReference type="EMBL" id="AK170258">
    <property type="protein sequence ID" value="BAE41666.1"/>
    <property type="molecule type" value="mRNA"/>
</dbReference>
<dbReference type="EMBL" id="BC052502">
    <property type="protein sequence ID" value="AAH52502.1"/>
    <property type="molecule type" value="mRNA"/>
</dbReference>
<dbReference type="EMBL" id="BC052734">
    <property type="protein sequence ID" value="AAH52734.1"/>
    <property type="molecule type" value="mRNA"/>
</dbReference>
<dbReference type="CCDS" id="CCDS24918.1"/>
<dbReference type="RefSeq" id="NP_694783.1">
    <property type="nucleotide sequence ID" value="NM_153143.5"/>
</dbReference>
<dbReference type="SMR" id="Q8K485"/>
<dbReference type="FunCoup" id="Q8K485">
    <property type="interactions" value="139"/>
</dbReference>
<dbReference type="STRING" id="10090.ENSMUSP00000159163"/>
<dbReference type="PhosphoSitePlus" id="Q8K485"/>
<dbReference type="PaxDb" id="10090-ENSMUSP00000059107"/>
<dbReference type="ProteomicsDB" id="269249"/>
<dbReference type="Antibodypedia" id="11945">
    <property type="antibodies" value="125 antibodies from 24 providers"/>
</dbReference>
<dbReference type="DNASU" id="216858"/>
<dbReference type="Ensembl" id="ENSMUST00000238978.2">
    <property type="protein sequence ID" value="ENSMUSP00000159163.2"/>
    <property type="gene ID" value="ENSMUSG00000046731.6"/>
</dbReference>
<dbReference type="GeneID" id="216858"/>
<dbReference type="KEGG" id="mmu:216858"/>
<dbReference type="UCSC" id="uc007jsd.2">
    <property type="organism name" value="mouse"/>
</dbReference>
<dbReference type="AGR" id="MGI:2448712"/>
<dbReference type="CTD" id="147040"/>
<dbReference type="MGI" id="MGI:2448712">
    <property type="gene designation" value="Kctd11"/>
</dbReference>
<dbReference type="VEuPathDB" id="HostDB:ENSMUSG00000046731"/>
<dbReference type="eggNOG" id="KOG2723">
    <property type="taxonomic scope" value="Eukaryota"/>
</dbReference>
<dbReference type="GeneTree" id="ENSGT00940000162799"/>
<dbReference type="HOGENOM" id="CLU_088122_0_0_1"/>
<dbReference type="InParanoid" id="Q8K485"/>
<dbReference type="OrthoDB" id="23316at9989"/>
<dbReference type="PhylomeDB" id="Q8K485"/>
<dbReference type="TreeFam" id="TF315332"/>
<dbReference type="UniPathway" id="UPA00143"/>
<dbReference type="BioGRID-ORCS" id="216858">
    <property type="hits" value="2 hits in 77 CRISPR screens"/>
</dbReference>
<dbReference type="ChiTaRS" id="Kctd11">
    <property type="organism name" value="mouse"/>
</dbReference>
<dbReference type="PRO" id="PR:Q8K485"/>
<dbReference type="Proteomes" id="UP000000589">
    <property type="component" value="Chromosome 11"/>
</dbReference>
<dbReference type="RNAct" id="Q8K485">
    <property type="molecule type" value="protein"/>
</dbReference>
<dbReference type="Bgee" id="ENSMUSG00000046731">
    <property type="expression patterns" value="Expressed in lip and 205 other cell types or tissues"/>
</dbReference>
<dbReference type="ExpressionAtlas" id="Q8K485">
    <property type="expression patterns" value="baseline and differential"/>
</dbReference>
<dbReference type="GO" id="GO:0005737">
    <property type="term" value="C:cytoplasm"/>
    <property type="evidence" value="ECO:0000314"/>
    <property type="project" value="MGI"/>
</dbReference>
<dbReference type="GO" id="GO:0042802">
    <property type="term" value="F:identical protein binding"/>
    <property type="evidence" value="ECO:0007669"/>
    <property type="project" value="Ensembl"/>
</dbReference>
<dbReference type="GO" id="GO:0016740">
    <property type="term" value="F:transferase activity"/>
    <property type="evidence" value="ECO:0007669"/>
    <property type="project" value="UniProtKB-KW"/>
</dbReference>
<dbReference type="GO" id="GO:0007406">
    <property type="term" value="P:negative regulation of neuroblast proliferation"/>
    <property type="evidence" value="ECO:0000314"/>
    <property type="project" value="MGI"/>
</dbReference>
<dbReference type="GO" id="GO:0045879">
    <property type="term" value="P:negative regulation of smoothened signaling pathway"/>
    <property type="evidence" value="ECO:0000314"/>
    <property type="project" value="MGI"/>
</dbReference>
<dbReference type="GO" id="GO:0007399">
    <property type="term" value="P:nervous system development"/>
    <property type="evidence" value="ECO:0000314"/>
    <property type="project" value="MGI"/>
</dbReference>
<dbReference type="GO" id="GO:0014016">
    <property type="term" value="P:neuroblast differentiation"/>
    <property type="evidence" value="ECO:0000314"/>
    <property type="project" value="MGI"/>
</dbReference>
<dbReference type="GO" id="GO:0007405">
    <property type="term" value="P:neuroblast proliferation"/>
    <property type="evidence" value="ECO:0000314"/>
    <property type="project" value="MGI"/>
</dbReference>
<dbReference type="GO" id="GO:0030182">
    <property type="term" value="P:neuron differentiation"/>
    <property type="evidence" value="ECO:0000314"/>
    <property type="project" value="MGI"/>
</dbReference>
<dbReference type="GO" id="GO:0045666">
    <property type="term" value="P:positive regulation of neuron differentiation"/>
    <property type="evidence" value="ECO:0000314"/>
    <property type="project" value="MGI"/>
</dbReference>
<dbReference type="GO" id="GO:0051260">
    <property type="term" value="P:protein homooligomerization"/>
    <property type="evidence" value="ECO:0007669"/>
    <property type="project" value="InterPro"/>
</dbReference>
<dbReference type="GO" id="GO:0016567">
    <property type="term" value="P:protein ubiquitination"/>
    <property type="evidence" value="ECO:0007669"/>
    <property type="project" value="UniProtKB-UniPathway"/>
</dbReference>
<dbReference type="GO" id="GO:0042127">
    <property type="term" value="P:regulation of cell population proliferation"/>
    <property type="evidence" value="ECO:0000314"/>
    <property type="project" value="MGI"/>
</dbReference>
<dbReference type="GO" id="GO:0007224">
    <property type="term" value="P:smoothened signaling pathway"/>
    <property type="evidence" value="ECO:0000314"/>
    <property type="project" value="MGI"/>
</dbReference>
<dbReference type="FunFam" id="3.30.710.10:FF:000121">
    <property type="entry name" value="BTB/POZ domain-containing protein KCTD11"/>
    <property type="match status" value="1"/>
</dbReference>
<dbReference type="Gene3D" id="3.30.710.10">
    <property type="entry name" value="Potassium Channel Kv1.1, Chain A"/>
    <property type="match status" value="1"/>
</dbReference>
<dbReference type="InterPro" id="IPR045763">
    <property type="entry name" value="KCTD11/21_C"/>
</dbReference>
<dbReference type="InterPro" id="IPR011333">
    <property type="entry name" value="SKP1/BTB/POZ_sf"/>
</dbReference>
<dbReference type="InterPro" id="IPR003131">
    <property type="entry name" value="T1-type_BTB"/>
</dbReference>
<dbReference type="PANTHER" id="PTHR14499:SF7">
    <property type="entry name" value="BTB_POZ DOMAIN-CONTAINING PROTEIN KCTD11"/>
    <property type="match status" value="1"/>
</dbReference>
<dbReference type="PANTHER" id="PTHR14499">
    <property type="entry name" value="POTASSIUM CHANNEL TETRAMERIZATION DOMAIN-CONTAINING"/>
    <property type="match status" value="1"/>
</dbReference>
<dbReference type="Pfam" id="PF02214">
    <property type="entry name" value="BTB_2"/>
    <property type="match status" value="1"/>
</dbReference>
<dbReference type="Pfam" id="PF19329">
    <property type="entry name" value="KCTD11_21_C"/>
    <property type="match status" value="1"/>
</dbReference>
<dbReference type="SUPFAM" id="SSF54695">
    <property type="entry name" value="POZ domain"/>
    <property type="match status" value="1"/>
</dbReference>
<gene>
    <name type="primary">Kctd11</name>
    <name type="synonym">Ren</name>
</gene>